<evidence type="ECO:0000269" key="1">
    <source>
    </source>
</evidence>
<evidence type="ECO:0000305" key="2"/>
<reference key="1">
    <citation type="journal article" date="1997" name="Science">
        <title>The complete genome sequence of Escherichia coli K-12.</title>
        <authorList>
            <person name="Blattner F.R."/>
            <person name="Plunkett G. III"/>
            <person name="Bloch C.A."/>
            <person name="Perna N.T."/>
            <person name="Burland V."/>
            <person name="Riley M."/>
            <person name="Collado-Vides J."/>
            <person name="Glasner J.D."/>
            <person name="Rode C.K."/>
            <person name="Mayhew G.F."/>
            <person name="Gregor J."/>
            <person name="Davis N.W."/>
            <person name="Kirkpatrick H.A."/>
            <person name="Goeden M.A."/>
            <person name="Rose D.J."/>
            <person name="Mau B."/>
            <person name="Shao Y."/>
        </authorList>
    </citation>
    <scope>NUCLEOTIDE SEQUENCE [LARGE SCALE GENOMIC DNA]</scope>
    <source>
        <strain>K12 / MG1655 / ATCC 47076</strain>
    </source>
</reference>
<reference key="2">
    <citation type="journal article" date="2006" name="Mol. Syst. Biol.">
        <title>Highly accurate genome sequences of Escherichia coli K-12 strains MG1655 and W3110.</title>
        <authorList>
            <person name="Hayashi K."/>
            <person name="Morooka N."/>
            <person name="Yamamoto Y."/>
            <person name="Fujita K."/>
            <person name="Isono K."/>
            <person name="Choi S."/>
            <person name="Ohtsubo E."/>
            <person name="Baba T."/>
            <person name="Wanner B.L."/>
            <person name="Mori H."/>
            <person name="Horiuchi T."/>
        </authorList>
    </citation>
    <scope>NUCLEOTIDE SEQUENCE [LARGE SCALE GENOMIC DNA]</scope>
    <source>
        <strain>K12 / W3110 / ATCC 27325 / DSM 5911</strain>
    </source>
</reference>
<reference key="3">
    <citation type="journal article" date="2008" name="Mol. Microbiol.">
        <title>Small membrane proteins found by comparative genomics and ribosome binding site models.</title>
        <authorList>
            <person name="Hemm M.R."/>
            <person name="Paul B.J."/>
            <person name="Schneider T.D."/>
            <person name="Storz G."/>
            <person name="Rudd K.E."/>
        </authorList>
    </citation>
    <scope>IDENTIFICATION</scope>
    <scope>INDUCTION</scope>
    <source>
        <strain>K12 / MG1655 / ATCC 47076</strain>
    </source>
</reference>
<sequence length="21" mass="2465">MKHIQIRNSDMDWHIAANNLG</sequence>
<comment type="induction">
    <text evidence="1">In stationary phase (at protein level).</text>
</comment>
<comment type="miscellaneous">
    <text evidence="2">This seems to be an N-terminal remnant of a longer hydrolase gene that can be found in some other Escherichia and Shigella strains.</text>
</comment>
<keyword id="KW-1185">Reference proteome</keyword>
<accession>P0CD93</accession>
<accession>A0A385XN21</accession>
<feature type="chain" id="PRO_0000391676" description="Protein YmjD">
    <location>
        <begin position="1"/>
        <end position="21"/>
    </location>
</feature>
<proteinExistence type="evidence at protein level"/>
<gene>
    <name type="primary">ymjD</name>
    <name type="ordered locus">b4673</name>
    <name type="ordered locus">JW5960.1</name>
</gene>
<protein>
    <recommendedName>
        <fullName>Protein YmjD</fullName>
    </recommendedName>
</protein>
<name>YMJD_ECOLI</name>
<organism>
    <name type="scientific">Escherichia coli (strain K12)</name>
    <dbReference type="NCBI Taxonomy" id="83333"/>
    <lineage>
        <taxon>Bacteria</taxon>
        <taxon>Pseudomonadati</taxon>
        <taxon>Pseudomonadota</taxon>
        <taxon>Gammaproteobacteria</taxon>
        <taxon>Enterobacterales</taxon>
        <taxon>Enterobacteriaceae</taxon>
        <taxon>Escherichia</taxon>
    </lineage>
</organism>
<dbReference type="EMBL" id="U00096">
    <property type="protein sequence ID" value="AYC08202.1"/>
    <property type="molecule type" value="Genomic_DNA"/>
</dbReference>
<dbReference type="EMBL" id="AP009048">
    <property type="status" value="NOT_ANNOTATED_CDS"/>
    <property type="molecule type" value="Genomic_DNA"/>
</dbReference>
<dbReference type="FunCoup" id="P0CD93">
    <property type="interactions" value="1"/>
</dbReference>
<dbReference type="EnsemblBacteria" id="AYC08202">
    <property type="protein sequence ID" value="AYC08202"/>
    <property type="gene ID" value="b4673"/>
</dbReference>
<dbReference type="InParanoid" id="P0CD93"/>
<dbReference type="BioCyc" id="EcoCyc:MONOMER0-2872"/>
<dbReference type="PRO" id="PR:P0CD93"/>
<dbReference type="Proteomes" id="UP000000625">
    <property type="component" value="Chromosome"/>
</dbReference>